<sequence>MAAEEEDEVEWVVESIAGFLRGPDWSIPILDFVEQKCEVFDDEEESKLTYTEIHQEYKELVEKLLEGYLKEIGINEDQFQEACTSPLAKTHTSQAILQPVLAAEDFTIFKAMMVQKNIEMQLQAIRIIQERNGVLPDCLTDGSDVVSDLEHEEMKILREVLRKSKEEYDQEEERKRKKQLSEAKTEEPTVHSSEAAIMNNSQGDGEHFAHPPSEVKMHFANQSIEPLGRKVERSETSSLPQKDLKIPGLEHASIEGPIANLSVLGTEELRQREHYLKQKRDKLMSMRKDMRTKQIQNMEQKGKPTGEVEEMTEKPEMTAEEKQTLLKRRLLAEKLKEEVINK</sequence>
<protein>
    <recommendedName>
        <fullName evidence="10">Cilia- and flagella-associated protein 36</fullName>
    </recommendedName>
    <alternativeName>
        <fullName evidence="10">Coiled-coil domain-containing protein 104</fullName>
    </alternativeName>
</protein>
<evidence type="ECO:0000250" key="1">
    <source>
        <dbReference type="UniProtKB" id="Q8C6E0"/>
    </source>
</evidence>
<evidence type="ECO:0000255" key="2"/>
<evidence type="ECO:0000256" key="3">
    <source>
        <dbReference type="SAM" id="MobiDB-lite"/>
    </source>
</evidence>
<evidence type="ECO:0000269" key="4">
    <source>
    </source>
</evidence>
<evidence type="ECO:0000269" key="5">
    <source>
    </source>
</evidence>
<evidence type="ECO:0000269" key="6">
    <source>
    </source>
</evidence>
<evidence type="ECO:0000303" key="7">
    <source>
    </source>
</evidence>
<evidence type="ECO:0000303" key="8">
    <source>
    </source>
</evidence>
<evidence type="ECO:0000305" key="9"/>
<evidence type="ECO:0000312" key="10">
    <source>
        <dbReference type="HGNC" id="HGNC:30540"/>
    </source>
</evidence>
<proteinExistence type="evidence at protein level"/>
<keyword id="KW-0025">Alternative splicing</keyword>
<keyword id="KW-0966">Cell projection</keyword>
<keyword id="KW-0969">Cilium</keyword>
<keyword id="KW-0175">Coiled coil</keyword>
<keyword id="KW-0963">Cytoplasm</keyword>
<keyword id="KW-0282">Flagellum</keyword>
<keyword id="KW-0539">Nucleus</keyword>
<keyword id="KW-0597">Phosphoprotein</keyword>
<keyword id="KW-1267">Proteomics identification</keyword>
<keyword id="KW-1185">Reference proteome</keyword>
<organism>
    <name type="scientific">Homo sapiens</name>
    <name type="common">Human</name>
    <dbReference type="NCBI Taxonomy" id="9606"/>
    <lineage>
        <taxon>Eukaryota</taxon>
        <taxon>Metazoa</taxon>
        <taxon>Chordata</taxon>
        <taxon>Craniata</taxon>
        <taxon>Vertebrata</taxon>
        <taxon>Euteleostomi</taxon>
        <taxon>Mammalia</taxon>
        <taxon>Eutheria</taxon>
        <taxon>Euarchontoglires</taxon>
        <taxon>Primates</taxon>
        <taxon>Haplorrhini</taxon>
        <taxon>Catarrhini</taxon>
        <taxon>Hominidae</taxon>
        <taxon>Homo</taxon>
    </lineage>
</organism>
<dbReference type="EMBL" id="AY358097">
    <property type="protein sequence ID" value="AAQ88464.1"/>
    <property type="molecule type" value="mRNA"/>
</dbReference>
<dbReference type="EMBL" id="BC010011">
    <property type="protein sequence ID" value="AAH10011.1"/>
    <property type="molecule type" value="mRNA"/>
</dbReference>
<dbReference type="EMBL" id="AC019198">
    <property type="protein sequence ID" value="AAY14933.1"/>
    <property type="molecule type" value="Genomic_DNA"/>
</dbReference>
<dbReference type="EMBL" id="AC015982">
    <property type="protein sequence ID" value="AAY24269.1"/>
    <property type="molecule type" value="Genomic_DNA"/>
</dbReference>
<dbReference type="CCDS" id="CCDS1854.2">
    <molecule id="Q96G28-1"/>
</dbReference>
<dbReference type="CCDS" id="CCDS62911.1">
    <molecule id="Q96G28-2"/>
</dbReference>
<dbReference type="RefSeq" id="NP_001269690.1">
    <molecule id="Q96G28-2"/>
    <property type="nucleotide sequence ID" value="NM_001282761.2"/>
</dbReference>
<dbReference type="RefSeq" id="NP_542398.3">
    <molecule id="Q96G28-1"/>
    <property type="nucleotide sequence ID" value="NM_080667.6"/>
</dbReference>
<dbReference type="SMR" id="Q96G28"/>
<dbReference type="BioGRID" id="125218">
    <property type="interactions" value="22"/>
</dbReference>
<dbReference type="DIP" id="DIP-57013N"/>
<dbReference type="FunCoup" id="Q96G28">
    <property type="interactions" value="283"/>
</dbReference>
<dbReference type="IntAct" id="Q96G28">
    <property type="interactions" value="15"/>
</dbReference>
<dbReference type="MINT" id="Q96G28"/>
<dbReference type="STRING" id="9606.ENSP00000342699"/>
<dbReference type="GlyGen" id="Q96G28">
    <property type="glycosylation" value="1 site, 1 O-linked glycan (1 site)"/>
</dbReference>
<dbReference type="iPTMnet" id="Q96G28"/>
<dbReference type="PhosphoSitePlus" id="Q96G28"/>
<dbReference type="BioMuta" id="CFAP36"/>
<dbReference type="DMDM" id="126215682"/>
<dbReference type="jPOST" id="Q96G28"/>
<dbReference type="MassIVE" id="Q96G28"/>
<dbReference type="PaxDb" id="9606-ENSP00000342699"/>
<dbReference type="PeptideAtlas" id="Q96G28"/>
<dbReference type="ProteomicsDB" id="76589">
    <molecule id="Q96G28-1"/>
</dbReference>
<dbReference type="ProteomicsDB" id="76590">
    <molecule id="Q96G28-2"/>
</dbReference>
<dbReference type="Pumba" id="Q96G28"/>
<dbReference type="Antibodypedia" id="2144">
    <property type="antibodies" value="49 antibodies from 14 providers"/>
</dbReference>
<dbReference type="DNASU" id="112942"/>
<dbReference type="Ensembl" id="ENST00000339012.7">
    <molecule id="Q96G28-2"/>
    <property type="protein sequence ID" value="ENSP00000342699.3"/>
    <property type="gene ID" value="ENSG00000163001.12"/>
</dbReference>
<dbReference type="Ensembl" id="ENST00000349456.9">
    <molecule id="Q96G28-1"/>
    <property type="protein sequence ID" value="ENSP00000295117.4"/>
    <property type="gene ID" value="ENSG00000163001.12"/>
</dbReference>
<dbReference type="GeneID" id="112942"/>
<dbReference type="KEGG" id="hsa:112942"/>
<dbReference type="MANE-Select" id="ENST00000349456.9">
    <property type="protein sequence ID" value="ENSP00000295117.4"/>
    <property type="RefSeq nucleotide sequence ID" value="NM_080667.7"/>
    <property type="RefSeq protein sequence ID" value="NP_542398.3"/>
</dbReference>
<dbReference type="UCSC" id="uc002ryx.4">
    <molecule id="Q96G28-1"/>
    <property type="organism name" value="human"/>
</dbReference>
<dbReference type="AGR" id="HGNC:30540"/>
<dbReference type="CTD" id="112942"/>
<dbReference type="DisGeNET" id="112942"/>
<dbReference type="GeneCards" id="CFAP36"/>
<dbReference type="HGNC" id="HGNC:30540">
    <property type="gene designation" value="CFAP36"/>
</dbReference>
<dbReference type="HPA" id="ENSG00000163001">
    <property type="expression patterns" value="Low tissue specificity"/>
</dbReference>
<dbReference type="neXtProt" id="NX_Q96G28"/>
<dbReference type="OpenTargets" id="ENSG00000163001"/>
<dbReference type="PharmGKB" id="PA145008608"/>
<dbReference type="VEuPathDB" id="HostDB:ENSG00000163001"/>
<dbReference type="eggNOG" id="KOG4511">
    <property type="taxonomic scope" value="Eukaryota"/>
</dbReference>
<dbReference type="GeneTree" id="ENSGT00390000012785"/>
<dbReference type="InParanoid" id="Q96G28"/>
<dbReference type="OMA" id="HKSPGHF"/>
<dbReference type="OrthoDB" id="272687at2759"/>
<dbReference type="PAN-GO" id="Q96G28">
    <property type="GO annotations" value="2 GO annotations based on evolutionary models"/>
</dbReference>
<dbReference type="PhylomeDB" id="Q96G28"/>
<dbReference type="TreeFam" id="TF315143"/>
<dbReference type="PathwayCommons" id="Q96G28"/>
<dbReference type="SignaLink" id="Q96G28"/>
<dbReference type="BioGRID-ORCS" id="112942">
    <property type="hits" value="11 hits in 1158 CRISPR screens"/>
</dbReference>
<dbReference type="ChiTaRS" id="CFAP36">
    <property type="organism name" value="human"/>
</dbReference>
<dbReference type="GenomeRNAi" id="112942"/>
<dbReference type="Pharos" id="Q96G28">
    <property type="development level" value="Tdark"/>
</dbReference>
<dbReference type="PRO" id="PR:Q96G28"/>
<dbReference type="Proteomes" id="UP000005640">
    <property type="component" value="Chromosome 2"/>
</dbReference>
<dbReference type="RNAct" id="Q96G28">
    <property type="molecule type" value="protein"/>
</dbReference>
<dbReference type="Bgee" id="ENSG00000163001">
    <property type="expression patterns" value="Expressed in left testis and 184 other cell types or tissues"/>
</dbReference>
<dbReference type="ExpressionAtlas" id="Q96G28">
    <property type="expression patterns" value="baseline and differential"/>
</dbReference>
<dbReference type="GO" id="GO:0005930">
    <property type="term" value="C:axoneme"/>
    <property type="evidence" value="ECO:0000318"/>
    <property type="project" value="GO_Central"/>
</dbReference>
<dbReference type="GO" id="GO:0097546">
    <property type="term" value="C:ciliary base"/>
    <property type="evidence" value="ECO:0000318"/>
    <property type="project" value="GO_Central"/>
</dbReference>
<dbReference type="GO" id="GO:0035869">
    <property type="term" value="C:ciliary transition zone"/>
    <property type="evidence" value="ECO:0000314"/>
    <property type="project" value="UniProtKB"/>
</dbReference>
<dbReference type="GO" id="GO:0031514">
    <property type="term" value="C:motile cilium"/>
    <property type="evidence" value="ECO:0007669"/>
    <property type="project" value="UniProtKB-SubCell"/>
</dbReference>
<dbReference type="GO" id="GO:0005634">
    <property type="term" value="C:nucleus"/>
    <property type="evidence" value="ECO:0007669"/>
    <property type="project" value="UniProtKB-SubCell"/>
</dbReference>
<dbReference type="FunFam" id="1.20.1520.10:FF:000001">
    <property type="entry name" value="Cilia- and flagella-associated protein 36"/>
    <property type="match status" value="1"/>
</dbReference>
<dbReference type="Gene3D" id="1.20.1520.10">
    <property type="entry name" value="ADP-ribosylation factor-like 2-binding protein, domain"/>
    <property type="match status" value="1"/>
</dbReference>
<dbReference type="InterPro" id="IPR023379">
    <property type="entry name" value="BART_dom"/>
</dbReference>
<dbReference type="InterPro" id="IPR042541">
    <property type="entry name" value="BART_sf"/>
</dbReference>
<dbReference type="InterPro" id="IPR038888">
    <property type="entry name" value="CFAP36"/>
</dbReference>
<dbReference type="PANTHER" id="PTHR21532:SF0">
    <property type="entry name" value="CILIA- AND FLAGELLA-ASSOCIATED PROTEIN 36"/>
    <property type="match status" value="1"/>
</dbReference>
<dbReference type="PANTHER" id="PTHR21532">
    <property type="entry name" value="PHOSPHODIESTERASE HL"/>
    <property type="match status" value="1"/>
</dbReference>
<dbReference type="Pfam" id="PF11527">
    <property type="entry name" value="ARL2_Bind_BART"/>
    <property type="match status" value="1"/>
</dbReference>
<gene>
    <name type="primary">CFAP36</name>
    <name type="synonym">CCDC104</name>
    <name type="ORF">UNQ163/PRO189</name>
</gene>
<reference key="1">
    <citation type="journal article" date="2003" name="Genome Res.">
        <title>The secreted protein discovery initiative (SPDI), a large-scale effort to identify novel human secreted and transmembrane proteins: a bioinformatics assessment.</title>
        <authorList>
            <person name="Clark H.F."/>
            <person name="Gurney A.L."/>
            <person name="Abaya E."/>
            <person name="Baker K."/>
            <person name="Baldwin D.T."/>
            <person name="Brush J."/>
            <person name="Chen J."/>
            <person name="Chow B."/>
            <person name="Chui C."/>
            <person name="Crowley C."/>
            <person name="Currell B."/>
            <person name="Deuel B."/>
            <person name="Dowd P."/>
            <person name="Eaton D."/>
            <person name="Foster J.S."/>
            <person name="Grimaldi C."/>
            <person name="Gu Q."/>
            <person name="Hass P.E."/>
            <person name="Heldens S."/>
            <person name="Huang A."/>
            <person name="Kim H.S."/>
            <person name="Klimowski L."/>
            <person name="Jin Y."/>
            <person name="Johnson S."/>
            <person name="Lee J."/>
            <person name="Lewis L."/>
            <person name="Liao D."/>
            <person name="Mark M.R."/>
            <person name="Robbie E."/>
            <person name="Sanchez C."/>
            <person name="Schoenfeld J."/>
            <person name="Seshagiri S."/>
            <person name="Simmons L."/>
            <person name="Singh J."/>
            <person name="Smith V."/>
            <person name="Stinson J."/>
            <person name="Vagts A."/>
            <person name="Vandlen R.L."/>
            <person name="Watanabe C."/>
            <person name="Wieand D."/>
            <person name="Woods K."/>
            <person name="Xie M.-H."/>
            <person name="Yansura D.G."/>
            <person name="Yi S."/>
            <person name="Yu G."/>
            <person name="Yuan J."/>
            <person name="Zhang M."/>
            <person name="Zhang Z."/>
            <person name="Goddard A.D."/>
            <person name="Wood W.I."/>
            <person name="Godowski P.J."/>
            <person name="Gray A.M."/>
        </authorList>
    </citation>
    <scope>NUCLEOTIDE SEQUENCE [LARGE SCALE MRNA] (ISOFORM 2)</scope>
    <scope>VARIANT GLY-243</scope>
</reference>
<reference key="2">
    <citation type="journal article" date="2005" name="Nature">
        <title>Generation and annotation of the DNA sequences of human chromosomes 2 and 4.</title>
        <authorList>
            <person name="Hillier L.W."/>
            <person name="Graves T.A."/>
            <person name="Fulton R.S."/>
            <person name="Fulton L.A."/>
            <person name="Pepin K.H."/>
            <person name="Minx P."/>
            <person name="Wagner-McPherson C."/>
            <person name="Layman D."/>
            <person name="Wylie K."/>
            <person name="Sekhon M."/>
            <person name="Becker M.C."/>
            <person name="Fewell G.A."/>
            <person name="Delehaunty K.D."/>
            <person name="Miner T.L."/>
            <person name="Nash W.E."/>
            <person name="Kremitzki C."/>
            <person name="Oddy L."/>
            <person name="Du H."/>
            <person name="Sun H."/>
            <person name="Bradshaw-Cordum H."/>
            <person name="Ali J."/>
            <person name="Carter J."/>
            <person name="Cordes M."/>
            <person name="Harris A."/>
            <person name="Isak A."/>
            <person name="van Brunt A."/>
            <person name="Nguyen C."/>
            <person name="Du F."/>
            <person name="Courtney L."/>
            <person name="Kalicki J."/>
            <person name="Ozersky P."/>
            <person name="Abbott S."/>
            <person name="Armstrong J."/>
            <person name="Belter E.A."/>
            <person name="Caruso L."/>
            <person name="Cedroni M."/>
            <person name="Cotton M."/>
            <person name="Davidson T."/>
            <person name="Desai A."/>
            <person name="Elliott G."/>
            <person name="Erb T."/>
            <person name="Fronick C."/>
            <person name="Gaige T."/>
            <person name="Haakenson W."/>
            <person name="Haglund K."/>
            <person name="Holmes A."/>
            <person name="Harkins R."/>
            <person name="Kim K."/>
            <person name="Kruchowski S.S."/>
            <person name="Strong C.M."/>
            <person name="Grewal N."/>
            <person name="Goyea E."/>
            <person name="Hou S."/>
            <person name="Levy A."/>
            <person name="Martinka S."/>
            <person name="Mead K."/>
            <person name="McLellan M.D."/>
            <person name="Meyer R."/>
            <person name="Randall-Maher J."/>
            <person name="Tomlinson C."/>
            <person name="Dauphin-Kohlberg S."/>
            <person name="Kozlowicz-Reilly A."/>
            <person name="Shah N."/>
            <person name="Swearengen-Shahid S."/>
            <person name="Snider J."/>
            <person name="Strong J.T."/>
            <person name="Thompson J."/>
            <person name="Yoakum M."/>
            <person name="Leonard S."/>
            <person name="Pearman C."/>
            <person name="Trani L."/>
            <person name="Radionenko M."/>
            <person name="Waligorski J.E."/>
            <person name="Wang C."/>
            <person name="Rock S.M."/>
            <person name="Tin-Wollam A.-M."/>
            <person name="Maupin R."/>
            <person name="Latreille P."/>
            <person name="Wendl M.C."/>
            <person name="Yang S.-P."/>
            <person name="Pohl C."/>
            <person name="Wallis J.W."/>
            <person name="Spieth J."/>
            <person name="Bieri T.A."/>
            <person name="Berkowicz N."/>
            <person name="Nelson J.O."/>
            <person name="Osborne J."/>
            <person name="Ding L."/>
            <person name="Meyer R."/>
            <person name="Sabo A."/>
            <person name="Shotland Y."/>
            <person name="Sinha P."/>
            <person name="Wohldmann P.E."/>
            <person name="Cook L.L."/>
            <person name="Hickenbotham M.T."/>
            <person name="Eldred J."/>
            <person name="Williams D."/>
            <person name="Jones T.A."/>
            <person name="She X."/>
            <person name="Ciccarelli F.D."/>
            <person name="Izaurralde E."/>
            <person name="Taylor J."/>
            <person name="Schmutz J."/>
            <person name="Myers R.M."/>
            <person name="Cox D.R."/>
            <person name="Huang X."/>
            <person name="McPherson J.D."/>
            <person name="Mardis E.R."/>
            <person name="Clifton S.W."/>
            <person name="Warren W.C."/>
            <person name="Chinwalla A.T."/>
            <person name="Eddy S.R."/>
            <person name="Marra M.A."/>
            <person name="Ovcharenko I."/>
            <person name="Furey T.S."/>
            <person name="Miller W."/>
            <person name="Eichler E.E."/>
            <person name="Bork P."/>
            <person name="Suyama M."/>
            <person name="Torrents D."/>
            <person name="Waterston R.H."/>
            <person name="Wilson R.K."/>
        </authorList>
    </citation>
    <scope>NUCLEOTIDE SEQUENCE [LARGE SCALE GENOMIC DNA]</scope>
</reference>
<reference key="3">
    <citation type="journal article" date="2004" name="Genome Res.">
        <title>The status, quality, and expansion of the NIH full-length cDNA project: the Mammalian Gene Collection (MGC).</title>
        <authorList>
            <consortium name="The MGC Project Team"/>
        </authorList>
    </citation>
    <scope>NUCLEOTIDE SEQUENCE [LARGE SCALE MRNA] (ISOFORM 1)</scope>
    <scope>VARIANTS GLY-243 AND PHE-246</scope>
    <source>
        <tissue>B-cell</tissue>
    </source>
</reference>
<reference key="4">
    <citation type="journal article" date="2009" name="Anal. Chem.">
        <title>Lys-N and trypsin cover complementary parts of the phosphoproteome in a refined SCX-based approach.</title>
        <authorList>
            <person name="Gauci S."/>
            <person name="Helbig A.O."/>
            <person name="Slijper M."/>
            <person name="Krijgsveld J."/>
            <person name="Heck A.J."/>
            <person name="Mohammed S."/>
        </authorList>
    </citation>
    <scope>IDENTIFICATION BY MASS SPECTROMETRY [LARGE SCALE ANALYSIS]</scope>
</reference>
<reference key="5">
    <citation type="journal article" date="2010" name="Cancer Immunol. Immunother.">
        <title>Antibody to CCDC104 is associated with a paraneoplastic antibody to CDR2 (anti-Yo).</title>
        <authorList>
            <person name="Totland C."/>
            <person name="Bredholt G."/>
            <person name="Haugen M."/>
            <person name="Haukanes B.I."/>
            <person name="Vedeler C.A."/>
        </authorList>
    </citation>
    <scope>SUBCELLULAR LOCATION</scope>
    <scope>TISSUE SPECIFICITY</scope>
</reference>
<reference key="6">
    <citation type="journal article" date="2011" name="Genes Dev.">
        <title>An ARL3-UNC119-RP2 GTPase cycle targets myristoylated NPHP3 to the primary cilium.</title>
        <authorList>
            <person name="Wright K.J."/>
            <person name="Baye L.M."/>
            <person name="Olivier-Mason A."/>
            <person name="Mukhopadhyay S."/>
            <person name="Sang L."/>
            <person name="Kwong M."/>
            <person name="Wang W."/>
            <person name="Pretorius P.R."/>
            <person name="Sheffield V.C."/>
            <person name="Sengupta P."/>
            <person name="Slusarski D.C."/>
            <person name="Jackson P.K."/>
        </authorList>
    </citation>
    <scope>INTERACTION WITH ARL3</scope>
    <scope>POSSIBLE FUNCTION</scope>
</reference>
<reference key="7">
    <citation type="journal article" date="2013" name="J. Proteome Res.">
        <title>Toward a comprehensive characterization of a human cancer cell phosphoproteome.</title>
        <authorList>
            <person name="Zhou H."/>
            <person name="Di Palma S."/>
            <person name="Preisinger C."/>
            <person name="Peng M."/>
            <person name="Polat A.N."/>
            <person name="Heck A.J."/>
            <person name="Mohammed S."/>
        </authorList>
    </citation>
    <scope>IDENTIFICATION BY MASS SPECTROMETRY [LARGE SCALE ANALYSIS]</scope>
    <source>
        <tissue>Erythroleukemia</tissue>
    </source>
</reference>
<accession>Q96G28</accession>
<accession>Q53SF0</accession>
<accession>Q53ST9</accession>
<accession>Q6UY34</accession>
<comment type="function">
    <text>May act as an effector for ARL3.</text>
</comment>
<comment type="subunit">
    <text evidence="6">Interacts with ARL3.</text>
</comment>
<comment type="interaction">
    <interactant intactId="EBI-2654750">
        <id>Q96G28</id>
    </interactant>
    <interactant intactId="EBI-724310">
        <id>Q15038</id>
        <label>DAZAP2</label>
    </interactant>
    <organismsDiffer>false</organismsDiffer>
    <experiments>3</experiments>
</comment>
<comment type="interaction">
    <interactant intactId="EBI-2654750">
        <id>Q96G28</id>
    </interactant>
    <interactant intactId="EBI-80411">
        <id>Q13425</id>
        <label>SNTB2</label>
    </interactant>
    <organismsDiffer>false</organismsDiffer>
    <experiments>3</experiments>
</comment>
<comment type="interaction">
    <interactant intactId="EBI-2654750">
        <id>Q96G28</id>
    </interactant>
    <interactant intactId="EBI-6860857">
        <id>Q9WUL7</id>
        <label>Arl3</label>
    </interactant>
    <organismsDiffer>true</organismsDiffer>
    <experiments>2</experiments>
</comment>
<comment type="subcellular location">
    <subcellularLocation>
        <location evidence="8">Nucleus</location>
    </subcellularLocation>
    <subcellularLocation>
        <location evidence="8">Cytoplasm</location>
    </subcellularLocation>
    <subcellularLocation>
        <location evidence="9">Cell projection</location>
        <location evidence="9">Cilium</location>
        <location evidence="9">Flagellum</location>
    </subcellularLocation>
</comment>
<comment type="alternative products">
    <event type="alternative splicing"/>
    <isoform>
        <id>Q96G28-1</id>
        <name>1</name>
        <sequence type="displayed"/>
    </isoform>
    <isoform>
        <id>Q96G28-2</id>
        <name>2</name>
        <sequence type="described" ref="VSP_023338"/>
    </isoform>
</comment>
<comment type="tissue specificity">
    <text evidence="8">Expressed in several human tissues including brain, testis, heart, lung, pancreas and spleen (at protein level).</text>
</comment>
<comment type="similarity">
    <text evidence="9">Belongs to the CFAP36 family.</text>
</comment>
<name>CFA36_HUMAN</name>
<feature type="chain" id="PRO_0000278638" description="Cilia- and flagella-associated protein 36">
    <location>
        <begin position="1"/>
        <end position="342"/>
    </location>
</feature>
<feature type="region of interest" description="Disordered" evidence="3">
    <location>
        <begin position="166"/>
        <end position="194"/>
    </location>
</feature>
<feature type="region of interest" description="Disordered" evidence="3">
    <location>
        <begin position="229"/>
        <end position="250"/>
    </location>
</feature>
<feature type="region of interest" description="Disordered" evidence="3">
    <location>
        <begin position="282"/>
        <end position="322"/>
    </location>
</feature>
<feature type="coiled-coil region" evidence="2">
    <location>
        <begin position="150"/>
        <end position="187"/>
    </location>
</feature>
<feature type="compositionally biased region" description="Basic and acidic residues" evidence="3">
    <location>
        <begin position="179"/>
        <end position="189"/>
    </location>
</feature>
<feature type="compositionally biased region" description="Basic and acidic residues" evidence="3">
    <location>
        <begin position="282"/>
        <end position="292"/>
    </location>
</feature>
<feature type="compositionally biased region" description="Basic and acidic residues" evidence="3">
    <location>
        <begin position="300"/>
        <end position="322"/>
    </location>
</feature>
<feature type="modified residue" description="Phosphoserine" evidence="1">
    <location>
        <position position="85"/>
    </location>
</feature>
<feature type="modified residue" description="Phosphoserine" evidence="1">
    <location>
        <position position="147"/>
    </location>
</feature>
<feature type="modified residue" description="Phosphoserine" evidence="1">
    <location>
        <position position="201"/>
    </location>
</feature>
<feature type="splice variant" id="VSP_023338" description="In isoform 2." evidence="7">
    <original>V</original>
    <variation>VNCKGGHVITPGSPEPVILVACVPLV</variation>
    <location>
        <position position="39"/>
    </location>
</feature>
<feature type="sequence variant" id="VAR_050725" description="In dbSNP:rs34891804.">
    <original>E</original>
    <variation>D</variation>
    <location>
        <position position="6"/>
    </location>
</feature>
<feature type="sequence variant" id="VAR_030795" description="In dbSNP:rs1045910." evidence="4 5">
    <original>D</original>
    <variation>G</variation>
    <location>
        <position position="243"/>
    </location>
</feature>
<feature type="sequence variant" id="VAR_030796" description="In dbSNP:rs1045920." evidence="5">
    <original>I</original>
    <variation>F</variation>
    <location>
        <position position="246"/>
    </location>
</feature>